<feature type="chain" id="PRO_0000295125" description="Transmembrane protein 248">
    <location>
        <begin position="1"/>
        <end position="314"/>
    </location>
</feature>
<feature type="transmembrane region" description="Helical" evidence="1">
    <location>
        <begin position="21"/>
        <end position="41"/>
    </location>
</feature>
<feature type="transmembrane region" description="Helical" evidence="1">
    <location>
        <begin position="179"/>
        <end position="199"/>
    </location>
</feature>
<feature type="transmembrane region" description="Helical" evidence="1">
    <location>
        <begin position="236"/>
        <end position="258"/>
    </location>
</feature>
<feature type="transmembrane region" description="Helical" evidence="1">
    <location>
        <begin position="270"/>
        <end position="290"/>
    </location>
</feature>
<feature type="region of interest" description="Disordered" evidence="2">
    <location>
        <begin position="79"/>
        <end position="107"/>
    </location>
</feature>
<feature type="compositionally biased region" description="Polar residues" evidence="2">
    <location>
        <begin position="80"/>
        <end position="102"/>
    </location>
</feature>
<protein>
    <recommendedName>
        <fullName>Transmembrane protein 248</fullName>
    </recommendedName>
</protein>
<comment type="subcellular location">
    <subcellularLocation>
        <location evidence="3">Membrane</location>
        <topology evidence="3">Multi-pass membrane protein</topology>
    </subcellularLocation>
</comment>
<comment type="similarity">
    <text evidence="3">Belongs to the TMEM248 family.</text>
</comment>
<proteinExistence type="evidence at transcript level"/>
<name>TM248_BOVIN</name>
<evidence type="ECO:0000255" key="1"/>
<evidence type="ECO:0000256" key="2">
    <source>
        <dbReference type="SAM" id="MobiDB-lite"/>
    </source>
</evidence>
<evidence type="ECO:0000305" key="3"/>
<accession>Q2YDM0</accession>
<organism>
    <name type="scientific">Bos taurus</name>
    <name type="common">Bovine</name>
    <dbReference type="NCBI Taxonomy" id="9913"/>
    <lineage>
        <taxon>Eukaryota</taxon>
        <taxon>Metazoa</taxon>
        <taxon>Chordata</taxon>
        <taxon>Craniata</taxon>
        <taxon>Vertebrata</taxon>
        <taxon>Euteleostomi</taxon>
        <taxon>Mammalia</taxon>
        <taxon>Eutheria</taxon>
        <taxon>Laurasiatheria</taxon>
        <taxon>Artiodactyla</taxon>
        <taxon>Ruminantia</taxon>
        <taxon>Pecora</taxon>
        <taxon>Bovidae</taxon>
        <taxon>Bovinae</taxon>
        <taxon>Bos</taxon>
    </lineage>
</organism>
<dbReference type="EMBL" id="BC110157">
    <property type="protein sequence ID" value="AAI10158.1"/>
    <property type="molecule type" value="mRNA"/>
</dbReference>
<dbReference type="RefSeq" id="NP_001039546.1">
    <property type="nucleotide sequence ID" value="NM_001046081.2"/>
</dbReference>
<dbReference type="RefSeq" id="XP_005224937.1">
    <property type="nucleotide sequence ID" value="XM_005224880.4"/>
</dbReference>
<dbReference type="RefSeq" id="XP_024840549.1">
    <property type="nucleotide sequence ID" value="XM_024984781.2"/>
</dbReference>
<dbReference type="RefSeq" id="XP_059737239.1">
    <property type="nucleotide sequence ID" value="XM_059881256.1"/>
</dbReference>
<dbReference type="RefSeq" id="XP_059737240.1">
    <property type="nucleotide sequence ID" value="XM_059881257.1"/>
</dbReference>
<dbReference type="FunCoup" id="Q2YDM0">
    <property type="interactions" value="2304"/>
</dbReference>
<dbReference type="STRING" id="9913.ENSBTAP00000003816"/>
<dbReference type="PaxDb" id="9913-ENSBTAP00000003816"/>
<dbReference type="GeneID" id="511252"/>
<dbReference type="KEGG" id="bta:511252"/>
<dbReference type="CTD" id="55069"/>
<dbReference type="VEuPathDB" id="HostDB:ENSBTAG00000002935"/>
<dbReference type="eggNOG" id="ENOG502R6D8">
    <property type="taxonomic scope" value="Eukaryota"/>
</dbReference>
<dbReference type="HOGENOM" id="CLU_080742_0_0_1"/>
<dbReference type="InParanoid" id="Q2YDM0"/>
<dbReference type="OMA" id="TLFCYAI"/>
<dbReference type="OrthoDB" id="6329605at2759"/>
<dbReference type="TreeFam" id="TF331542"/>
<dbReference type="Proteomes" id="UP000009136">
    <property type="component" value="Chromosome 25"/>
</dbReference>
<dbReference type="Bgee" id="ENSBTAG00000002935">
    <property type="expression patterns" value="Expressed in corpus epididymis and 102 other cell types or tissues"/>
</dbReference>
<dbReference type="GO" id="GO:0016020">
    <property type="term" value="C:membrane"/>
    <property type="evidence" value="ECO:0007669"/>
    <property type="project" value="UniProtKB-SubCell"/>
</dbReference>
<dbReference type="InterPro" id="IPR039493">
    <property type="entry name" value="TMEM248/TMEM219"/>
</dbReference>
<dbReference type="InterPro" id="IPR039587">
    <property type="entry name" value="TMEM248/TMEM219_dom"/>
</dbReference>
<dbReference type="PANTHER" id="PTHR16002:SF5">
    <property type="entry name" value="TRANSMEMBRANE PROTEIN 248"/>
    <property type="match status" value="1"/>
</dbReference>
<dbReference type="PANTHER" id="PTHR16002">
    <property type="entry name" value="TRANSMEMBRANE PROTEIN 248-LIKE"/>
    <property type="match status" value="1"/>
</dbReference>
<dbReference type="Pfam" id="PF14940">
    <property type="entry name" value="TMEM219"/>
    <property type="match status" value="1"/>
</dbReference>
<reference key="1">
    <citation type="submission" date="2005-11" db="EMBL/GenBank/DDBJ databases">
        <authorList>
            <consortium name="NIH - Mammalian Gene Collection (MGC) project"/>
        </authorList>
    </citation>
    <scope>NUCLEOTIDE SEQUENCE [LARGE SCALE MRNA]</scope>
    <source>
        <strain>Crossbred X Angus</strain>
        <tissue>Liver</tissue>
    </source>
</reference>
<keyword id="KW-0472">Membrane</keyword>
<keyword id="KW-1185">Reference proteome</keyword>
<keyword id="KW-0812">Transmembrane</keyword>
<keyword id="KW-1133">Transmembrane helix</keyword>
<sequence length="314" mass="35068">MFNINPLENLKLYISSRPPLVVFMISVSAMAIAFLTLGYFFKIKEIKSPEMAEDWNTFLLRFNDLDLCVSENETLKHLTNDTAAPESTVTSGQARTSTQSPQPLEDAGPVNISVAITLTLDPLKPFGGYSRNVTHLYSTILGHQIGLSGREAQEEINITFTLPTSWSSDDCALHGHCEQVVFTACMTLTAHPGVFPVTVQPPHCVPDTYSNATLWYKIFTTARDANTKYAQDYNPFWCYKGAIGKVYHALNPKLTVIVPDDDRSLINLHLMHTSYFLFVMVITMFCYAVIKGRPSKLRQSNPEFCPEKVALADA</sequence>
<gene>
    <name type="primary">TMEM248</name>
</gene>